<accession>A6QKH7</accession>
<organism>
    <name type="scientific">Staphylococcus aureus (strain Newman)</name>
    <dbReference type="NCBI Taxonomy" id="426430"/>
    <lineage>
        <taxon>Bacteria</taxon>
        <taxon>Bacillati</taxon>
        <taxon>Bacillota</taxon>
        <taxon>Bacilli</taxon>
        <taxon>Bacillales</taxon>
        <taxon>Staphylococcaceae</taxon>
        <taxon>Staphylococcus</taxon>
    </lineage>
</organism>
<name>TRHO_STAAE</name>
<gene>
    <name evidence="1" type="primary">trhO</name>
    <name type="ordered locus">NWMN_2587</name>
</gene>
<protein>
    <recommendedName>
        <fullName evidence="1">tRNA uridine(34) hydroxylase</fullName>
        <ecNumber evidence="1">1.14.-.-</ecNumber>
    </recommendedName>
    <alternativeName>
        <fullName evidence="1">tRNA hydroxylation protein O</fullName>
    </alternativeName>
</protein>
<keyword id="KW-0560">Oxidoreductase</keyword>
<keyword id="KW-0819">tRNA processing</keyword>
<sequence>MNYQVLLYYKYMTIDDPEQFAQDHLAFCKAHHLKGRILVSTEGINGTLSGTKEETEQYMAHMHADERFKDMVFKIDEAEGHAFKKMHVRPRKEIVALDLEDDVDPRHTTGQYLSPVEFRKALEDDDTVIIDARNDYEFDLGHFRGAIRPNITRFRDLPDWIKENKALFADKKVVTYCTGGIRCEKFSGWLLKEGFEDVAQLHGGIATYGKDPETKGEYWDGKMYVFDDRISVDINQVEKTIIGKDWFDGKPCERYINCANPECNKQILVSEENETKYLGACSYECAKHERNRYVQANNISDNEWQQRLTNFDDLHQHA</sequence>
<dbReference type="EC" id="1.14.-.-" evidence="1"/>
<dbReference type="EMBL" id="AP009351">
    <property type="protein sequence ID" value="BAF68859.1"/>
    <property type="molecule type" value="Genomic_DNA"/>
</dbReference>
<dbReference type="RefSeq" id="WP_001109273.1">
    <property type="nucleotide sequence ID" value="NZ_JBBIAE010000005.1"/>
</dbReference>
<dbReference type="SMR" id="A6QKH7"/>
<dbReference type="KEGG" id="sae:NWMN_2587"/>
<dbReference type="HOGENOM" id="CLU_038878_1_0_9"/>
<dbReference type="Proteomes" id="UP000006386">
    <property type="component" value="Chromosome"/>
</dbReference>
<dbReference type="GO" id="GO:0016705">
    <property type="term" value="F:oxidoreductase activity, acting on paired donors, with incorporation or reduction of molecular oxygen"/>
    <property type="evidence" value="ECO:0007669"/>
    <property type="project" value="UniProtKB-UniRule"/>
</dbReference>
<dbReference type="GO" id="GO:0006400">
    <property type="term" value="P:tRNA modification"/>
    <property type="evidence" value="ECO:0007669"/>
    <property type="project" value="UniProtKB-UniRule"/>
</dbReference>
<dbReference type="CDD" id="cd01518">
    <property type="entry name" value="RHOD_YceA"/>
    <property type="match status" value="1"/>
</dbReference>
<dbReference type="Gene3D" id="3.30.70.100">
    <property type="match status" value="1"/>
</dbReference>
<dbReference type="Gene3D" id="3.40.250.10">
    <property type="entry name" value="Rhodanese-like domain"/>
    <property type="match status" value="1"/>
</dbReference>
<dbReference type="HAMAP" id="MF_00469">
    <property type="entry name" value="TrhO"/>
    <property type="match status" value="1"/>
</dbReference>
<dbReference type="InterPro" id="IPR001763">
    <property type="entry name" value="Rhodanese-like_dom"/>
</dbReference>
<dbReference type="InterPro" id="IPR036873">
    <property type="entry name" value="Rhodanese-like_dom_sf"/>
</dbReference>
<dbReference type="InterPro" id="IPR022111">
    <property type="entry name" value="Rhodanese_C"/>
</dbReference>
<dbReference type="InterPro" id="IPR020936">
    <property type="entry name" value="TrhO"/>
</dbReference>
<dbReference type="InterPro" id="IPR040503">
    <property type="entry name" value="TRHO_N"/>
</dbReference>
<dbReference type="NCBIfam" id="NF001135">
    <property type="entry name" value="PRK00142.1-3"/>
    <property type="match status" value="1"/>
</dbReference>
<dbReference type="PANTHER" id="PTHR43268:SF3">
    <property type="entry name" value="RHODANESE-LIKE DOMAIN-CONTAINING PROTEIN 7-RELATED"/>
    <property type="match status" value="1"/>
</dbReference>
<dbReference type="PANTHER" id="PTHR43268">
    <property type="entry name" value="THIOSULFATE SULFURTRANSFERASE/RHODANESE-LIKE DOMAIN-CONTAINING PROTEIN 2"/>
    <property type="match status" value="1"/>
</dbReference>
<dbReference type="Pfam" id="PF00581">
    <property type="entry name" value="Rhodanese"/>
    <property type="match status" value="1"/>
</dbReference>
<dbReference type="Pfam" id="PF12368">
    <property type="entry name" value="Rhodanese_C"/>
    <property type="match status" value="1"/>
</dbReference>
<dbReference type="Pfam" id="PF17773">
    <property type="entry name" value="UPF0176_N"/>
    <property type="match status" value="1"/>
</dbReference>
<dbReference type="SMART" id="SM00450">
    <property type="entry name" value="RHOD"/>
    <property type="match status" value="1"/>
</dbReference>
<dbReference type="SUPFAM" id="SSF52821">
    <property type="entry name" value="Rhodanese/Cell cycle control phosphatase"/>
    <property type="match status" value="1"/>
</dbReference>
<dbReference type="PROSITE" id="PS50206">
    <property type="entry name" value="RHODANESE_3"/>
    <property type="match status" value="1"/>
</dbReference>
<feature type="chain" id="PRO_1000072391" description="tRNA uridine(34) hydroxylase">
    <location>
        <begin position="1"/>
        <end position="318"/>
    </location>
</feature>
<feature type="domain" description="Rhodanese" evidence="1">
    <location>
        <begin position="123"/>
        <end position="217"/>
    </location>
</feature>
<feature type="active site" description="Cysteine persulfide intermediate" evidence="1">
    <location>
        <position position="177"/>
    </location>
</feature>
<reference key="1">
    <citation type="journal article" date="2008" name="J. Bacteriol.">
        <title>Genome sequence of Staphylococcus aureus strain Newman and comparative analysis of staphylococcal genomes: polymorphism and evolution of two major pathogenicity islands.</title>
        <authorList>
            <person name="Baba T."/>
            <person name="Bae T."/>
            <person name="Schneewind O."/>
            <person name="Takeuchi F."/>
            <person name="Hiramatsu K."/>
        </authorList>
    </citation>
    <scope>NUCLEOTIDE SEQUENCE [LARGE SCALE GENOMIC DNA]</scope>
    <source>
        <strain>Newman</strain>
    </source>
</reference>
<evidence type="ECO:0000255" key="1">
    <source>
        <dbReference type="HAMAP-Rule" id="MF_00469"/>
    </source>
</evidence>
<comment type="function">
    <text evidence="1">Catalyzes oxygen-dependent 5-hydroxyuridine (ho5U) modification at position 34 in tRNAs.</text>
</comment>
<comment type="catalytic activity">
    <reaction evidence="1">
        <text>uridine(34) in tRNA + AH2 + O2 = 5-hydroxyuridine(34) in tRNA + A + H2O</text>
        <dbReference type="Rhea" id="RHEA:64224"/>
        <dbReference type="Rhea" id="RHEA-COMP:11727"/>
        <dbReference type="Rhea" id="RHEA-COMP:13381"/>
        <dbReference type="ChEBI" id="CHEBI:13193"/>
        <dbReference type="ChEBI" id="CHEBI:15377"/>
        <dbReference type="ChEBI" id="CHEBI:15379"/>
        <dbReference type="ChEBI" id="CHEBI:17499"/>
        <dbReference type="ChEBI" id="CHEBI:65315"/>
        <dbReference type="ChEBI" id="CHEBI:136877"/>
    </reaction>
</comment>
<comment type="similarity">
    <text evidence="1">Belongs to the TrhO family.</text>
</comment>
<proteinExistence type="inferred from homology"/>